<reference key="1">
    <citation type="journal article" date="2005" name="Nucleic Acids Res.">
        <title>Genome dynamics and diversity of Shigella species, the etiologic agents of bacillary dysentery.</title>
        <authorList>
            <person name="Yang F."/>
            <person name="Yang J."/>
            <person name="Zhang X."/>
            <person name="Chen L."/>
            <person name="Jiang Y."/>
            <person name="Yan Y."/>
            <person name="Tang X."/>
            <person name="Wang J."/>
            <person name="Xiong Z."/>
            <person name="Dong J."/>
            <person name="Xue Y."/>
            <person name="Zhu Y."/>
            <person name="Xu X."/>
            <person name="Sun L."/>
            <person name="Chen S."/>
            <person name="Nie H."/>
            <person name="Peng J."/>
            <person name="Xu J."/>
            <person name="Wang Y."/>
            <person name="Yuan Z."/>
            <person name="Wen Y."/>
            <person name="Yao Z."/>
            <person name="Shen Y."/>
            <person name="Qiang B."/>
            <person name="Hou Y."/>
            <person name="Yu J."/>
            <person name="Jin Q."/>
        </authorList>
    </citation>
    <scope>NUCLEOTIDE SEQUENCE [LARGE SCALE GENOMIC DNA]</scope>
    <source>
        <strain>Sb227</strain>
    </source>
</reference>
<name>EX7S_SHIBS</name>
<keyword id="KW-0963">Cytoplasm</keyword>
<keyword id="KW-0269">Exonuclease</keyword>
<keyword id="KW-0378">Hydrolase</keyword>
<keyword id="KW-0540">Nuclease</keyword>
<dbReference type="EC" id="3.1.11.6" evidence="1"/>
<dbReference type="EMBL" id="CP000036">
    <property type="protein sequence ID" value="ABB65029.1"/>
    <property type="molecule type" value="Genomic_DNA"/>
</dbReference>
<dbReference type="RefSeq" id="WP_001124935.1">
    <property type="nucleotide sequence ID" value="NC_007613.1"/>
</dbReference>
<dbReference type="SMR" id="Q325H9"/>
<dbReference type="GeneID" id="75202844"/>
<dbReference type="KEGG" id="sbo:SBO_0316"/>
<dbReference type="HOGENOM" id="CLU_145918_3_3_6"/>
<dbReference type="Proteomes" id="UP000007067">
    <property type="component" value="Chromosome"/>
</dbReference>
<dbReference type="GO" id="GO:0005829">
    <property type="term" value="C:cytosol"/>
    <property type="evidence" value="ECO:0007669"/>
    <property type="project" value="TreeGrafter"/>
</dbReference>
<dbReference type="GO" id="GO:0009318">
    <property type="term" value="C:exodeoxyribonuclease VII complex"/>
    <property type="evidence" value="ECO:0007669"/>
    <property type="project" value="InterPro"/>
</dbReference>
<dbReference type="GO" id="GO:0008855">
    <property type="term" value="F:exodeoxyribonuclease VII activity"/>
    <property type="evidence" value="ECO:0007669"/>
    <property type="project" value="UniProtKB-UniRule"/>
</dbReference>
<dbReference type="GO" id="GO:0006308">
    <property type="term" value="P:DNA catabolic process"/>
    <property type="evidence" value="ECO:0007669"/>
    <property type="project" value="UniProtKB-UniRule"/>
</dbReference>
<dbReference type="FunFam" id="1.10.287.1040:FF:000001">
    <property type="entry name" value="Exodeoxyribonuclease 7 small subunit"/>
    <property type="match status" value="1"/>
</dbReference>
<dbReference type="Gene3D" id="1.10.287.1040">
    <property type="entry name" value="Exonuclease VII, small subunit"/>
    <property type="match status" value="1"/>
</dbReference>
<dbReference type="HAMAP" id="MF_00337">
    <property type="entry name" value="Exonuc_7_S"/>
    <property type="match status" value="1"/>
</dbReference>
<dbReference type="InterPro" id="IPR003761">
    <property type="entry name" value="Exonuc_VII_S"/>
</dbReference>
<dbReference type="InterPro" id="IPR037004">
    <property type="entry name" value="Exonuc_VII_ssu_sf"/>
</dbReference>
<dbReference type="NCBIfam" id="NF002137">
    <property type="entry name" value="PRK00977.1-1"/>
    <property type="match status" value="1"/>
</dbReference>
<dbReference type="NCBIfam" id="NF002140">
    <property type="entry name" value="PRK00977.1-4"/>
    <property type="match status" value="1"/>
</dbReference>
<dbReference type="NCBIfam" id="TIGR01280">
    <property type="entry name" value="xseB"/>
    <property type="match status" value="1"/>
</dbReference>
<dbReference type="PANTHER" id="PTHR34137">
    <property type="entry name" value="EXODEOXYRIBONUCLEASE 7 SMALL SUBUNIT"/>
    <property type="match status" value="1"/>
</dbReference>
<dbReference type="PANTHER" id="PTHR34137:SF1">
    <property type="entry name" value="EXODEOXYRIBONUCLEASE 7 SMALL SUBUNIT"/>
    <property type="match status" value="1"/>
</dbReference>
<dbReference type="Pfam" id="PF02609">
    <property type="entry name" value="Exonuc_VII_S"/>
    <property type="match status" value="1"/>
</dbReference>
<dbReference type="PIRSF" id="PIRSF006488">
    <property type="entry name" value="Exonuc_VII_S"/>
    <property type="match status" value="1"/>
</dbReference>
<dbReference type="SUPFAM" id="SSF116842">
    <property type="entry name" value="XseB-like"/>
    <property type="match status" value="1"/>
</dbReference>
<sequence length="80" mass="8952">MPKKNEAPASFEKALSELEQIVTRLESGDLPLEEALNEFERGVQLARQGQAKLQQAEQRVQILLSDNEDASLTPFTPDNE</sequence>
<comment type="function">
    <text evidence="1">Bidirectionally degrades single-stranded DNA into large acid-insoluble oligonucleotides, which are then degraded further into small acid-soluble oligonucleotides.</text>
</comment>
<comment type="catalytic activity">
    <reaction evidence="1">
        <text>Exonucleolytic cleavage in either 5'- to 3'- or 3'- to 5'-direction to yield nucleoside 5'-phosphates.</text>
        <dbReference type="EC" id="3.1.11.6"/>
    </reaction>
</comment>
<comment type="subunit">
    <text evidence="1">Heterooligomer composed of large and small subunits.</text>
</comment>
<comment type="subcellular location">
    <subcellularLocation>
        <location evidence="1">Cytoplasm</location>
    </subcellularLocation>
</comment>
<comment type="similarity">
    <text evidence="1">Belongs to the XseB family.</text>
</comment>
<proteinExistence type="inferred from homology"/>
<feature type="chain" id="PRO_0000303745" description="Exodeoxyribonuclease 7 small subunit">
    <location>
        <begin position="1"/>
        <end position="80"/>
    </location>
</feature>
<accession>Q325H9</accession>
<protein>
    <recommendedName>
        <fullName evidence="1">Exodeoxyribonuclease 7 small subunit</fullName>
        <ecNumber evidence="1">3.1.11.6</ecNumber>
    </recommendedName>
    <alternativeName>
        <fullName evidence="1">Exodeoxyribonuclease VII small subunit</fullName>
        <shortName evidence="1">Exonuclease VII small subunit</shortName>
    </alternativeName>
</protein>
<organism>
    <name type="scientific">Shigella boydii serotype 4 (strain Sb227)</name>
    <dbReference type="NCBI Taxonomy" id="300268"/>
    <lineage>
        <taxon>Bacteria</taxon>
        <taxon>Pseudomonadati</taxon>
        <taxon>Pseudomonadota</taxon>
        <taxon>Gammaproteobacteria</taxon>
        <taxon>Enterobacterales</taxon>
        <taxon>Enterobacteriaceae</taxon>
        <taxon>Shigella</taxon>
    </lineage>
</organism>
<gene>
    <name evidence="1" type="primary">xseB</name>
    <name type="ordered locus">SBO_0316</name>
</gene>
<evidence type="ECO:0000255" key="1">
    <source>
        <dbReference type="HAMAP-Rule" id="MF_00337"/>
    </source>
</evidence>